<gene>
    <name evidence="1" type="primary">rplJ</name>
    <name type="ordered locus">YPTS_0301</name>
</gene>
<protein>
    <recommendedName>
        <fullName evidence="1">Large ribosomal subunit protein uL10</fullName>
    </recommendedName>
    <alternativeName>
        <fullName evidence="2">50S ribosomal protein L10</fullName>
    </alternativeName>
</protein>
<name>RL10_YERPB</name>
<reference key="1">
    <citation type="submission" date="2008-04" db="EMBL/GenBank/DDBJ databases">
        <title>Complete sequence of Yersinia pseudotuberculosis PB1/+.</title>
        <authorList>
            <person name="Copeland A."/>
            <person name="Lucas S."/>
            <person name="Lapidus A."/>
            <person name="Glavina del Rio T."/>
            <person name="Dalin E."/>
            <person name="Tice H."/>
            <person name="Bruce D."/>
            <person name="Goodwin L."/>
            <person name="Pitluck S."/>
            <person name="Munk A.C."/>
            <person name="Brettin T."/>
            <person name="Detter J.C."/>
            <person name="Han C."/>
            <person name="Tapia R."/>
            <person name="Schmutz J."/>
            <person name="Larimer F."/>
            <person name="Land M."/>
            <person name="Hauser L."/>
            <person name="Challacombe J.F."/>
            <person name="Green L."/>
            <person name="Lindler L.E."/>
            <person name="Nikolich M.P."/>
            <person name="Richardson P."/>
        </authorList>
    </citation>
    <scope>NUCLEOTIDE SEQUENCE [LARGE SCALE GENOMIC DNA]</scope>
    <source>
        <strain>PB1/+</strain>
    </source>
</reference>
<feature type="chain" id="PRO_1000121037" description="Large ribosomal subunit protein uL10">
    <location>
        <begin position="1"/>
        <end position="165"/>
    </location>
</feature>
<proteinExistence type="inferred from homology"/>
<keyword id="KW-0687">Ribonucleoprotein</keyword>
<keyword id="KW-0689">Ribosomal protein</keyword>
<keyword id="KW-0694">RNA-binding</keyword>
<keyword id="KW-0699">rRNA-binding</keyword>
<sequence length="165" mass="17676">MALNLQGKQAIVAEVKEVAKGALSAVVADSRGVTVDKMTELRRAGREAGVHMQVVRNTLLRRIVEGTPFECLKDTFVGPTLIAFSAEHPGAAARLFKAFAKDNAKFEVKAAAFEGELIPAAQIDRLATLPTYEEAIARLMGTMKEAAAGKLVRTLAALRDQKEAA</sequence>
<evidence type="ECO:0000255" key="1">
    <source>
        <dbReference type="HAMAP-Rule" id="MF_00362"/>
    </source>
</evidence>
<evidence type="ECO:0000305" key="2"/>
<dbReference type="EMBL" id="CP001048">
    <property type="protein sequence ID" value="ACC87292.1"/>
    <property type="molecule type" value="Genomic_DNA"/>
</dbReference>
<dbReference type="RefSeq" id="WP_002210674.1">
    <property type="nucleotide sequence ID" value="NZ_CP009780.1"/>
</dbReference>
<dbReference type="GeneID" id="96663774"/>
<dbReference type="KEGG" id="ypb:YPTS_0301"/>
<dbReference type="PATRIC" id="fig|502801.10.peg.3976"/>
<dbReference type="GO" id="GO:0015934">
    <property type="term" value="C:large ribosomal subunit"/>
    <property type="evidence" value="ECO:0007669"/>
    <property type="project" value="InterPro"/>
</dbReference>
<dbReference type="GO" id="GO:0070180">
    <property type="term" value="F:large ribosomal subunit rRNA binding"/>
    <property type="evidence" value="ECO:0007669"/>
    <property type="project" value="UniProtKB-UniRule"/>
</dbReference>
<dbReference type="GO" id="GO:0003735">
    <property type="term" value="F:structural constituent of ribosome"/>
    <property type="evidence" value="ECO:0007669"/>
    <property type="project" value="InterPro"/>
</dbReference>
<dbReference type="GO" id="GO:0006412">
    <property type="term" value="P:translation"/>
    <property type="evidence" value="ECO:0007669"/>
    <property type="project" value="UniProtKB-UniRule"/>
</dbReference>
<dbReference type="CDD" id="cd05797">
    <property type="entry name" value="Ribosomal_L10"/>
    <property type="match status" value="1"/>
</dbReference>
<dbReference type="FunFam" id="3.30.70.1730:FF:000001">
    <property type="entry name" value="50S ribosomal protein L10"/>
    <property type="match status" value="1"/>
</dbReference>
<dbReference type="Gene3D" id="3.30.70.1730">
    <property type="match status" value="1"/>
</dbReference>
<dbReference type="Gene3D" id="6.10.250.2350">
    <property type="match status" value="1"/>
</dbReference>
<dbReference type="HAMAP" id="MF_00362">
    <property type="entry name" value="Ribosomal_uL10"/>
    <property type="match status" value="1"/>
</dbReference>
<dbReference type="InterPro" id="IPR001790">
    <property type="entry name" value="Ribosomal_uL10"/>
</dbReference>
<dbReference type="InterPro" id="IPR043141">
    <property type="entry name" value="Ribosomal_uL10-like_sf"/>
</dbReference>
<dbReference type="InterPro" id="IPR022973">
    <property type="entry name" value="Ribosomal_uL10_bac"/>
</dbReference>
<dbReference type="InterPro" id="IPR047865">
    <property type="entry name" value="Ribosomal_uL10_bac_type"/>
</dbReference>
<dbReference type="InterPro" id="IPR002363">
    <property type="entry name" value="Ribosomal_uL10_CS_bac"/>
</dbReference>
<dbReference type="NCBIfam" id="NF000955">
    <property type="entry name" value="PRK00099.1-1"/>
    <property type="match status" value="1"/>
</dbReference>
<dbReference type="PANTHER" id="PTHR11560">
    <property type="entry name" value="39S RIBOSOMAL PROTEIN L10, MITOCHONDRIAL"/>
    <property type="match status" value="1"/>
</dbReference>
<dbReference type="Pfam" id="PF00466">
    <property type="entry name" value="Ribosomal_L10"/>
    <property type="match status" value="1"/>
</dbReference>
<dbReference type="SUPFAM" id="SSF160369">
    <property type="entry name" value="Ribosomal protein L10-like"/>
    <property type="match status" value="1"/>
</dbReference>
<dbReference type="PROSITE" id="PS01109">
    <property type="entry name" value="RIBOSOMAL_L10"/>
    <property type="match status" value="1"/>
</dbReference>
<accession>B2K110</accession>
<organism>
    <name type="scientific">Yersinia pseudotuberculosis serotype IB (strain PB1/+)</name>
    <dbReference type="NCBI Taxonomy" id="502801"/>
    <lineage>
        <taxon>Bacteria</taxon>
        <taxon>Pseudomonadati</taxon>
        <taxon>Pseudomonadota</taxon>
        <taxon>Gammaproteobacteria</taxon>
        <taxon>Enterobacterales</taxon>
        <taxon>Yersiniaceae</taxon>
        <taxon>Yersinia</taxon>
    </lineage>
</organism>
<comment type="function">
    <text evidence="1">Forms part of the ribosomal stalk, playing a central role in the interaction of the ribosome with GTP-bound translation factors.</text>
</comment>
<comment type="subunit">
    <text evidence="1">Part of the ribosomal stalk of the 50S ribosomal subunit. The N-terminus interacts with L11 and the large rRNA to form the base of the stalk. The C-terminus forms an elongated spine to which L12 dimers bind in a sequential fashion forming a multimeric L10(L12)X complex.</text>
</comment>
<comment type="similarity">
    <text evidence="1">Belongs to the universal ribosomal protein uL10 family.</text>
</comment>